<feature type="chain" id="PRO_1000116116" description="Cobalt transport protein CbiN">
    <location>
        <begin position="1"/>
        <end position="93"/>
    </location>
</feature>
<feature type="transmembrane region" description="Helical" evidence="1">
    <location>
        <begin position="5"/>
        <end position="25"/>
    </location>
</feature>
<feature type="transmembrane region" description="Helical" evidence="1">
    <location>
        <begin position="63"/>
        <end position="83"/>
    </location>
</feature>
<proteinExistence type="inferred from homology"/>
<keyword id="KW-0997">Cell inner membrane</keyword>
<keyword id="KW-1003">Cell membrane</keyword>
<keyword id="KW-0169">Cobalamin biosynthesis</keyword>
<keyword id="KW-0170">Cobalt</keyword>
<keyword id="KW-0171">Cobalt transport</keyword>
<keyword id="KW-0406">Ion transport</keyword>
<keyword id="KW-0472">Membrane</keyword>
<keyword id="KW-0812">Transmembrane</keyword>
<keyword id="KW-1133">Transmembrane helix</keyword>
<keyword id="KW-0813">Transport</keyword>
<name>CBIN_SALSV</name>
<accession>B4TZQ1</accession>
<dbReference type="EMBL" id="CP001127">
    <property type="protein sequence ID" value="ACF88671.1"/>
    <property type="molecule type" value="Genomic_DNA"/>
</dbReference>
<dbReference type="RefSeq" id="WP_000753212.1">
    <property type="nucleotide sequence ID" value="NC_011094.1"/>
</dbReference>
<dbReference type="KEGG" id="sew:SeSA_A2191"/>
<dbReference type="HOGENOM" id="CLU_136197_2_0_6"/>
<dbReference type="UniPathway" id="UPA00148"/>
<dbReference type="Proteomes" id="UP000001865">
    <property type="component" value="Chromosome"/>
</dbReference>
<dbReference type="GO" id="GO:0005886">
    <property type="term" value="C:plasma membrane"/>
    <property type="evidence" value="ECO:0007669"/>
    <property type="project" value="UniProtKB-SubCell"/>
</dbReference>
<dbReference type="GO" id="GO:0015087">
    <property type="term" value="F:cobalt ion transmembrane transporter activity"/>
    <property type="evidence" value="ECO:0007669"/>
    <property type="project" value="UniProtKB-UniRule"/>
</dbReference>
<dbReference type="GO" id="GO:0009236">
    <property type="term" value="P:cobalamin biosynthetic process"/>
    <property type="evidence" value="ECO:0007669"/>
    <property type="project" value="UniProtKB-UniRule"/>
</dbReference>
<dbReference type="HAMAP" id="MF_00330">
    <property type="entry name" value="CbiN"/>
    <property type="match status" value="1"/>
</dbReference>
<dbReference type="InterPro" id="IPR003705">
    <property type="entry name" value="CbiN"/>
</dbReference>
<dbReference type="NCBIfam" id="TIGR01165">
    <property type="entry name" value="cbiN"/>
    <property type="match status" value="1"/>
</dbReference>
<dbReference type="NCBIfam" id="NF002780">
    <property type="entry name" value="PRK02898.1"/>
    <property type="match status" value="1"/>
</dbReference>
<dbReference type="PANTHER" id="PTHR38662">
    <property type="entry name" value="COBALT TRANSPORT PROTEIN CBIN"/>
    <property type="match status" value="1"/>
</dbReference>
<dbReference type="PANTHER" id="PTHR38662:SF1">
    <property type="entry name" value="COBALT TRANSPORT PROTEIN CBIN"/>
    <property type="match status" value="1"/>
</dbReference>
<dbReference type="Pfam" id="PF02553">
    <property type="entry name" value="CbiN"/>
    <property type="match status" value="1"/>
</dbReference>
<sequence length="93" mass="10269">MKKTLMLLAMVVALVILPFFINHGGEYGGSDGEAESQIQAIAPQYKPWFQPLYEPASGEIESLLFTLQGSLGAAVIFYILGYCKGKQRRDDRA</sequence>
<comment type="function">
    <text evidence="1">Part of the energy-coupling factor (ECF) transporter complex CbiMNOQ involved in cobalt import.</text>
</comment>
<comment type="pathway">
    <text evidence="1">Cofactor biosynthesis; adenosylcobalamin biosynthesis.</text>
</comment>
<comment type="subunit">
    <text evidence="1">Forms an energy-coupling factor (ECF) transporter complex composed of an ATP-binding protein (A component, CbiO), a transmembrane protein (T component, CbiQ) and 2 possible substrate-capture proteins (S components, CbiM and CbiN) of unknown stoichimetry.</text>
</comment>
<comment type="subcellular location">
    <subcellularLocation>
        <location evidence="1">Cell inner membrane</location>
        <topology evidence="1">Multi-pass membrane protein</topology>
    </subcellularLocation>
</comment>
<comment type="similarity">
    <text evidence="1">Belongs to the CbiN family.</text>
</comment>
<evidence type="ECO:0000255" key="1">
    <source>
        <dbReference type="HAMAP-Rule" id="MF_00330"/>
    </source>
</evidence>
<protein>
    <recommendedName>
        <fullName evidence="1">Cobalt transport protein CbiN</fullName>
    </recommendedName>
    <alternativeName>
        <fullName evidence="1">Energy-coupling factor transporter probable substrate-capture protein CbiN</fullName>
        <shortName evidence="1">ECF transporter S component CbiN</shortName>
    </alternativeName>
</protein>
<organism>
    <name type="scientific">Salmonella schwarzengrund (strain CVM19633)</name>
    <dbReference type="NCBI Taxonomy" id="439843"/>
    <lineage>
        <taxon>Bacteria</taxon>
        <taxon>Pseudomonadati</taxon>
        <taxon>Pseudomonadota</taxon>
        <taxon>Gammaproteobacteria</taxon>
        <taxon>Enterobacterales</taxon>
        <taxon>Enterobacteriaceae</taxon>
        <taxon>Salmonella</taxon>
    </lineage>
</organism>
<gene>
    <name evidence="1" type="primary">cbiN</name>
    <name type="ordered locus">SeSA_A2191</name>
</gene>
<reference key="1">
    <citation type="journal article" date="2011" name="J. Bacteriol.">
        <title>Comparative genomics of 28 Salmonella enterica isolates: evidence for CRISPR-mediated adaptive sublineage evolution.</title>
        <authorList>
            <person name="Fricke W.F."/>
            <person name="Mammel M.K."/>
            <person name="McDermott P.F."/>
            <person name="Tartera C."/>
            <person name="White D.G."/>
            <person name="Leclerc J.E."/>
            <person name="Ravel J."/>
            <person name="Cebula T.A."/>
        </authorList>
    </citation>
    <scope>NUCLEOTIDE SEQUENCE [LARGE SCALE GENOMIC DNA]</scope>
    <source>
        <strain>CVM19633</strain>
    </source>
</reference>